<name>IOLD_CLOBB</name>
<gene>
    <name evidence="1" type="primary">iolD</name>
    <name type="ordered locus">CLL_A1304</name>
</gene>
<keyword id="KW-0378">Hydrolase</keyword>
<keyword id="KW-0460">Magnesium</keyword>
<keyword id="KW-0479">Metal-binding</keyword>
<keyword id="KW-0520">NAD</keyword>
<keyword id="KW-0786">Thiamine pyrophosphate</keyword>
<feature type="chain" id="PRO_0000352538" description="3D-(3,5/4)-trihydroxycyclohexane-1,2-dione hydrolase">
    <location>
        <begin position="1"/>
        <end position="643"/>
    </location>
</feature>
<feature type="region of interest" description="Thiamine pyrophosphate binding" evidence="1">
    <location>
        <begin position="441"/>
        <end position="521"/>
    </location>
</feature>
<feature type="binding site" evidence="1">
    <location>
        <position position="65"/>
    </location>
    <ligand>
        <name>thiamine diphosphate</name>
        <dbReference type="ChEBI" id="CHEBI:58937"/>
    </ligand>
</feature>
<feature type="binding site" evidence="1">
    <location>
        <position position="492"/>
    </location>
    <ligand>
        <name>Mg(2+)</name>
        <dbReference type="ChEBI" id="CHEBI:18420"/>
    </ligand>
</feature>
<feature type="binding site" evidence="1">
    <location>
        <position position="519"/>
    </location>
    <ligand>
        <name>Mg(2+)</name>
        <dbReference type="ChEBI" id="CHEBI:18420"/>
    </ligand>
</feature>
<organism>
    <name type="scientific">Clostridium botulinum (strain Eklund 17B / Type B)</name>
    <dbReference type="NCBI Taxonomy" id="935198"/>
    <lineage>
        <taxon>Bacteria</taxon>
        <taxon>Bacillati</taxon>
        <taxon>Bacillota</taxon>
        <taxon>Clostridia</taxon>
        <taxon>Eubacteriales</taxon>
        <taxon>Clostridiaceae</taxon>
        <taxon>Clostridium</taxon>
    </lineage>
</organism>
<comment type="function">
    <text evidence="1">Involved in the cleavage of the C1-C2 bond of 3D-(3,5/4)-trihydroxycyclohexane-1,2-dione (THcHDO) to yield 5-deoxy-glucuronate (5DG).</text>
</comment>
<comment type="catalytic activity">
    <reaction evidence="1">
        <text>3D-3,5/4-trihydroxycyclohexane-1,2-dione + H2O = 5-deoxy-D-glucuronate + H(+)</text>
        <dbReference type="Rhea" id="RHEA:25836"/>
        <dbReference type="ChEBI" id="CHEBI:15377"/>
        <dbReference type="ChEBI" id="CHEBI:15378"/>
        <dbReference type="ChEBI" id="CHEBI:28446"/>
        <dbReference type="ChEBI" id="CHEBI:58852"/>
        <dbReference type="EC" id="3.7.1.22"/>
    </reaction>
</comment>
<comment type="cofactor">
    <cofactor evidence="1">
        <name>Mg(2+)</name>
        <dbReference type="ChEBI" id="CHEBI:18420"/>
    </cofactor>
    <text evidence="1">Binds 1 Mg(2+) ion per subunit.</text>
</comment>
<comment type="cofactor">
    <cofactor evidence="1">
        <name>thiamine diphosphate</name>
        <dbReference type="ChEBI" id="CHEBI:58937"/>
    </cofactor>
    <text evidence="1">Binds 1 thiamine pyrophosphate per subunit.</text>
</comment>
<comment type="pathway">
    <text evidence="1">Polyol metabolism; myo-inositol degradation into acetyl-CoA; acetyl-CoA from myo-inositol: step 3/7.</text>
</comment>
<comment type="similarity">
    <text evidence="1">Belongs to the TPP enzyme family.</text>
</comment>
<protein>
    <recommendedName>
        <fullName evidence="1">3D-(3,5/4)-trihydroxycyclohexane-1,2-dione hydrolase</fullName>
        <shortName evidence="1">THcHDO hydrolase</shortName>
        <ecNumber evidence="1">3.7.1.22</ecNumber>
    </recommendedName>
</protein>
<evidence type="ECO:0000255" key="1">
    <source>
        <dbReference type="HAMAP-Rule" id="MF_01669"/>
    </source>
</evidence>
<accession>B2TJ86</accession>
<reference key="1">
    <citation type="submission" date="2008-04" db="EMBL/GenBank/DDBJ databases">
        <title>Complete sequence of Clostridium botulinum strain Eklund.</title>
        <authorList>
            <person name="Brinkac L.M."/>
            <person name="Brown J.L."/>
            <person name="Bruce D."/>
            <person name="Detter C."/>
            <person name="Munk C."/>
            <person name="Smith L.A."/>
            <person name="Smith T.J."/>
            <person name="Sutton G."/>
            <person name="Brettin T.S."/>
        </authorList>
    </citation>
    <scope>NUCLEOTIDE SEQUENCE [LARGE SCALE GENOMIC DNA]</scope>
    <source>
        <strain>Eklund 17B / Type B</strain>
    </source>
</reference>
<proteinExistence type="inferred from homology"/>
<sequence length="643" mass="71510">MKSTKMTTAQALVKFLDNQYVSFDGKEEKFVHGIFTIFGHGIVVGLGQALDENPRGLKVYQGRNEQGMAHAATAFAKQNNRRKIIACSSSIGPGAANMVTAAATATVNNIPLLLLPGDSFATRQPDPVLQQIEQSYNLGITTNDVFKPVCKYWDRVNRPEQLMSAMINAMRVLTDPAETGAVCIALPQDVQGESFEFPEYFFKKRVHKITRPLAVEEEFYECLNIIKNKKKPIIICGGGVRYSEAGDTLSKFANRFNIPIGETQAGKSSIKSSDLMNLGGIGVTGNLAANIIAKDADLVIGVGTRFSDFTTASKSLFENPDVEFVTINLSKFHASKLDSCKMVGDVKECLEYLYKLLEKENYISSYKDEIKDAKMAWKEEMKKLTNIKYEENFDPIIKFRNKESLEEFKKLTDTTITQTSALGLIRECIDNDAIIVGASGSLPGDLQRMWETESLNSYHMEYGYSCMGYEIAAGFGAKLAEPEKEVYSILGDGSYLMLHSELITSIQENKKVNVLLFDNCGFGCINNLQMSNGIGNLATEFRYRNDETNKLNGKLIPIDFAKAAAGYGLKTYTAKNLEELKNALIDAKKQRVSTLIDIKVLPKTMTDGYESWWHVGLAEVSEKESVNKAFENNKKVLKSARKY</sequence>
<dbReference type="EC" id="3.7.1.22" evidence="1"/>
<dbReference type="EMBL" id="CP001056">
    <property type="protein sequence ID" value="ACD24665.1"/>
    <property type="molecule type" value="Genomic_DNA"/>
</dbReference>
<dbReference type="SMR" id="B2TJ86"/>
<dbReference type="KEGG" id="cbk:CLL_A1304"/>
<dbReference type="HOGENOM" id="CLU_013748_6_0_9"/>
<dbReference type="UniPathway" id="UPA00076">
    <property type="reaction ID" value="UER00145"/>
</dbReference>
<dbReference type="Proteomes" id="UP000001195">
    <property type="component" value="Chromosome"/>
</dbReference>
<dbReference type="GO" id="GO:0005948">
    <property type="term" value="C:acetolactate synthase complex"/>
    <property type="evidence" value="ECO:0007669"/>
    <property type="project" value="TreeGrafter"/>
</dbReference>
<dbReference type="GO" id="GO:0102481">
    <property type="term" value="F:3D-(3,5/4)-trihydroxycyclohexane-1,2-dione hydrolase activity"/>
    <property type="evidence" value="ECO:0007669"/>
    <property type="project" value="UniProtKB-EC"/>
</dbReference>
<dbReference type="GO" id="GO:0003984">
    <property type="term" value="F:acetolactate synthase activity"/>
    <property type="evidence" value="ECO:0007669"/>
    <property type="project" value="TreeGrafter"/>
</dbReference>
<dbReference type="GO" id="GO:0050660">
    <property type="term" value="F:flavin adenine dinucleotide binding"/>
    <property type="evidence" value="ECO:0007669"/>
    <property type="project" value="TreeGrafter"/>
</dbReference>
<dbReference type="GO" id="GO:0000287">
    <property type="term" value="F:magnesium ion binding"/>
    <property type="evidence" value="ECO:0007669"/>
    <property type="project" value="UniProtKB-UniRule"/>
</dbReference>
<dbReference type="GO" id="GO:0030976">
    <property type="term" value="F:thiamine pyrophosphate binding"/>
    <property type="evidence" value="ECO:0007669"/>
    <property type="project" value="UniProtKB-UniRule"/>
</dbReference>
<dbReference type="GO" id="GO:0019310">
    <property type="term" value="P:inositol catabolic process"/>
    <property type="evidence" value="ECO:0007669"/>
    <property type="project" value="UniProtKB-UniRule"/>
</dbReference>
<dbReference type="GO" id="GO:0009097">
    <property type="term" value="P:isoleucine biosynthetic process"/>
    <property type="evidence" value="ECO:0007669"/>
    <property type="project" value="TreeGrafter"/>
</dbReference>
<dbReference type="GO" id="GO:0009099">
    <property type="term" value="P:L-valine biosynthetic process"/>
    <property type="evidence" value="ECO:0007669"/>
    <property type="project" value="TreeGrafter"/>
</dbReference>
<dbReference type="CDD" id="cd02003">
    <property type="entry name" value="TPP_IolD"/>
    <property type="match status" value="1"/>
</dbReference>
<dbReference type="CDD" id="cd07035">
    <property type="entry name" value="TPP_PYR_POX_like"/>
    <property type="match status" value="1"/>
</dbReference>
<dbReference type="Gene3D" id="3.40.50.970">
    <property type="match status" value="2"/>
</dbReference>
<dbReference type="Gene3D" id="3.40.50.1220">
    <property type="entry name" value="TPP-binding domain"/>
    <property type="match status" value="1"/>
</dbReference>
<dbReference type="HAMAP" id="MF_01669">
    <property type="entry name" value="IolD"/>
    <property type="match status" value="1"/>
</dbReference>
<dbReference type="InterPro" id="IPR029035">
    <property type="entry name" value="DHS-like_NAD/FAD-binding_dom"/>
</dbReference>
<dbReference type="InterPro" id="IPR030817">
    <property type="entry name" value="Myo_inos_IolD"/>
</dbReference>
<dbReference type="InterPro" id="IPR023757">
    <property type="entry name" value="THcHDO_hydrolase_firmi"/>
</dbReference>
<dbReference type="InterPro" id="IPR029061">
    <property type="entry name" value="THDP-binding"/>
</dbReference>
<dbReference type="InterPro" id="IPR012000">
    <property type="entry name" value="Thiamin_PyroP_enz_cen_dom"/>
</dbReference>
<dbReference type="InterPro" id="IPR012001">
    <property type="entry name" value="Thiamin_PyroP_enz_TPP-bd_dom"/>
</dbReference>
<dbReference type="InterPro" id="IPR000399">
    <property type="entry name" value="TPP-bd_CS"/>
</dbReference>
<dbReference type="InterPro" id="IPR045229">
    <property type="entry name" value="TPP_enz"/>
</dbReference>
<dbReference type="InterPro" id="IPR011766">
    <property type="entry name" value="TPP_enzyme_TPP-bd"/>
</dbReference>
<dbReference type="NCBIfam" id="TIGR04377">
    <property type="entry name" value="myo_inos_iolD"/>
    <property type="match status" value="1"/>
</dbReference>
<dbReference type="PANTHER" id="PTHR18968:SF9">
    <property type="entry name" value="3D-(3,5_4)-TRIHYDROXYCYCLOHEXANE-1,2-DIONE HYDROLASE"/>
    <property type="match status" value="1"/>
</dbReference>
<dbReference type="PANTHER" id="PTHR18968">
    <property type="entry name" value="THIAMINE PYROPHOSPHATE ENZYMES"/>
    <property type="match status" value="1"/>
</dbReference>
<dbReference type="Pfam" id="PF02775">
    <property type="entry name" value="TPP_enzyme_C"/>
    <property type="match status" value="1"/>
</dbReference>
<dbReference type="Pfam" id="PF00205">
    <property type="entry name" value="TPP_enzyme_M"/>
    <property type="match status" value="1"/>
</dbReference>
<dbReference type="Pfam" id="PF02776">
    <property type="entry name" value="TPP_enzyme_N"/>
    <property type="match status" value="1"/>
</dbReference>
<dbReference type="SUPFAM" id="SSF52467">
    <property type="entry name" value="DHS-like NAD/FAD-binding domain"/>
    <property type="match status" value="1"/>
</dbReference>
<dbReference type="SUPFAM" id="SSF52518">
    <property type="entry name" value="Thiamin diphosphate-binding fold (THDP-binding)"/>
    <property type="match status" value="2"/>
</dbReference>
<dbReference type="PROSITE" id="PS00187">
    <property type="entry name" value="TPP_ENZYMES"/>
    <property type="match status" value="1"/>
</dbReference>